<evidence type="ECO:0000255" key="1">
    <source>
        <dbReference type="HAMAP-Rule" id="MF_01456"/>
    </source>
</evidence>
<keyword id="KW-1003">Cell membrane</keyword>
<keyword id="KW-0472">Membrane</keyword>
<keyword id="KW-0520">NAD</keyword>
<keyword id="KW-0874">Quinone</keyword>
<keyword id="KW-1185">Reference proteome</keyword>
<keyword id="KW-1278">Translocase</keyword>
<keyword id="KW-0812">Transmembrane</keyword>
<keyword id="KW-1133">Transmembrane helix</keyword>
<keyword id="KW-0813">Transport</keyword>
<sequence>MVPTTYYLALSGLLFALGMIGVLTRRTAIMVFLSVELMLNAANLSLVAFARAWGDLTGQTAVFIVMTLAAAEVAIGLAIIVAIFRKRETTNVDDLAGLKG</sequence>
<protein>
    <recommendedName>
        <fullName evidence="1">NADH-quinone oxidoreductase subunit K</fullName>
        <ecNumber evidence="1">7.1.1.-</ecNumber>
    </recommendedName>
    <alternativeName>
        <fullName evidence="1">NADH dehydrogenase I subunit K</fullName>
    </alternativeName>
    <alternativeName>
        <fullName evidence="1">NDH-1 subunit K</fullName>
    </alternativeName>
</protein>
<comment type="function">
    <text evidence="1">NDH-1 shuttles electrons from NADH, via FMN and iron-sulfur (Fe-S) centers, to quinones in the respiratory chain. The immediate electron acceptor for the enzyme in this species is believed to be a menaquinone. Couples the redox reaction to proton translocation (for every two electrons transferred, four hydrogen ions are translocated across the cytoplasmic membrane), and thus conserves the redox energy in a proton gradient.</text>
</comment>
<comment type="catalytic activity">
    <reaction evidence="1">
        <text>a quinone + NADH + 5 H(+)(in) = a quinol + NAD(+) + 4 H(+)(out)</text>
        <dbReference type="Rhea" id="RHEA:57888"/>
        <dbReference type="ChEBI" id="CHEBI:15378"/>
        <dbReference type="ChEBI" id="CHEBI:24646"/>
        <dbReference type="ChEBI" id="CHEBI:57540"/>
        <dbReference type="ChEBI" id="CHEBI:57945"/>
        <dbReference type="ChEBI" id="CHEBI:132124"/>
    </reaction>
</comment>
<comment type="subunit">
    <text evidence="1">NDH-1 is composed of 15 different subunits. Subunits NuoA, H, J, K, L, M, N constitute the membrane sector of the complex.</text>
</comment>
<comment type="subcellular location">
    <subcellularLocation>
        <location evidence="1">Cell membrane</location>
        <topology evidence="1">Multi-pass membrane protein</topology>
    </subcellularLocation>
</comment>
<comment type="similarity">
    <text evidence="1">Belongs to the complex I subunit 4L family.</text>
</comment>
<accession>C1D0I1</accession>
<gene>
    <name evidence="1" type="primary">nuoK</name>
    <name type="ordered locus">Deide_05190</name>
</gene>
<reference key="1">
    <citation type="journal article" date="2009" name="PLoS Genet.">
        <title>Alliance of proteomics and genomics to unravel the specificities of Sahara bacterium Deinococcus deserti.</title>
        <authorList>
            <person name="de Groot A."/>
            <person name="Dulermo R."/>
            <person name="Ortet P."/>
            <person name="Blanchard L."/>
            <person name="Guerin P."/>
            <person name="Fernandez B."/>
            <person name="Vacherie B."/>
            <person name="Dossat C."/>
            <person name="Jolivet E."/>
            <person name="Siguier P."/>
            <person name="Chandler M."/>
            <person name="Barakat M."/>
            <person name="Dedieu A."/>
            <person name="Barbe V."/>
            <person name="Heulin T."/>
            <person name="Sommer S."/>
            <person name="Achouak W."/>
            <person name="Armengaud J."/>
        </authorList>
    </citation>
    <scope>NUCLEOTIDE SEQUENCE [LARGE SCALE GENOMIC DNA]</scope>
    <source>
        <strain>DSM 17065 / CIP 109153 / LMG 22923 / VCD115</strain>
    </source>
</reference>
<feature type="chain" id="PRO_0000390026" description="NADH-quinone oxidoreductase subunit K">
    <location>
        <begin position="1"/>
        <end position="100"/>
    </location>
</feature>
<feature type="transmembrane region" description="Helical" evidence="1">
    <location>
        <begin position="2"/>
        <end position="22"/>
    </location>
</feature>
<feature type="transmembrane region" description="Helical" evidence="1">
    <location>
        <begin position="29"/>
        <end position="49"/>
    </location>
</feature>
<feature type="transmembrane region" description="Helical" evidence="1">
    <location>
        <begin position="63"/>
        <end position="83"/>
    </location>
</feature>
<proteinExistence type="inferred from homology"/>
<name>NUOK_DEIDV</name>
<organism>
    <name type="scientific">Deinococcus deserti (strain DSM 17065 / CIP 109153 / LMG 22923 / VCD115)</name>
    <dbReference type="NCBI Taxonomy" id="546414"/>
    <lineage>
        <taxon>Bacteria</taxon>
        <taxon>Thermotogati</taxon>
        <taxon>Deinococcota</taxon>
        <taxon>Deinococci</taxon>
        <taxon>Deinococcales</taxon>
        <taxon>Deinococcaceae</taxon>
        <taxon>Deinococcus</taxon>
    </lineage>
</organism>
<dbReference type="EC" id="7.1.1.-" evidence="1"/>
<dbReference type="EMBL" id="CP001114">
    <property type="protein sequence ID" value="ACO45355.1"/>
    <property type="molecule type" value="Genomic_DNA"/>
</dbReference>
<dbReference type="RefSeq" id="WP_012692478.1">
    <property type="nucleotide sequence ID" value="NC_012526.1"/>
</dbReference>
<dbReference type="SMR" id="C1D0I1"/>
<dbReference type="STRING" id="546414.Deide_05190"/>
<dbReference type="PaxDb" id="546414-Deide_05190"/>
<dbReference type="KEGG" id="ddr:Deide_05190"/>
<dbReference type="eggNOG" id="COG0713">
    <property type="taxonomic scope" value="Bacteria"/>
</dbReference>
<dbReference type="HOGENOM" id="CLU_144724_0_0_0"/>
<dbReference type="OrthoDB" id="9810120at2"/>
<dbReference type="Proteomes" id="UP000002208">
    <property type="component" value="Chromosome"/>
</dbReference>
<dbReference type="GO" id="GO:0030964">
    <property type="term" value="C:NADH dehydrogenase complex"/>
    <property type="evidence" value="ECO:0007669"/>
    <property type="project" value="TreeGrafter"/>
</dbReference>
<dbReference type="GO" id="GO:0005886">
    <property type="term" value="C:plasma membrane"/>
    <property type="evidence" value="ECO:0007669"/>
    <property type="project" value="UniProtKB-SubCell"/>
</dbReference>
<dbReference type="GO" id="GO:0050136">
    <property type="term" value="F:NADH:ubiquinone reductase (non-electrogenic) activity"/>
    <property type="evidence" value="ECO:0007669"/>
    <property type="project" value="UniProtKB-UniRule"/>
</dbReference>
<dbReference type="GO" id="GO:0048038">
    <property type="term" value="F:quinone binding"/>
    <property type="evidence" value="ECO:0007669"/>
    <property type="project" value="UniProtKB-KW"/>
</dbReference>
<dbReference type="GO" id="GO:0042773">
    <property type="term" value="P:ATP synthesis coupled electron transport"/>
    <property type="evidence" value="ECO:0007669"/>
    <property type="project" value="InterPro"/>
</dbReference>
<dbReference type="FunFam" id="1.10.287.3510:FF:000001">
    <property type="entry name" value="NADH-quinone oxidoreductase subunit K"/>
    <property type="match status" value="1"/>
</dbReference>
<dbReference type="Gene3D" id="1.10.287.3510">
    <property type="match status" value="1"/>
</dbReference>
<dbReference type="HAMAP" id="MF_01456">
    <property type="entry name" value="NDH1_NuoK"/>
    <property type="match status" value="1"/>
</dbReference>
<dbReference type="InterPro" id="IPR001133">
    <property type="entry name" value="NADH_UbQ_OxRdtase_chain4L/K"/>
</dbReference>
<dbReference type="InterPro" id="IPR039428">
    <property type="entry name" value="NUOK/Mnh_C1-like"/>
</dbReference>
<dbReference type="NCBIfam" id="NF004320">
    <property type="entry name" value="PRK05715.1-2"/>
    <property type="match status" value="1"/>
</dbReference>
<dbReference type="NCBIfam" id="NF004321">
    <property type="entry name" value="PRK05715.1-3"/>
    <property type="match status" value="1"/>
</dbReference>
<dbReference type="NCBIfam" id="NF004323">
    <property type="entry name" value="PRK05715.1-5"/>
    <property type="match status" value="1"/>
</dbReference>
<dbReference type="PANTHER" id="PTHR11434:SF21">
    <property type="entry name" value="NADH DEHYDROGENASE SUBUNIT 4L-RELATED"/>
    <property type="match status" value="1"/>
</dbReference>
<dbReference type="PANTHER" id="PTHR11434">
    <property type="entry name" value="NADH-UBIQUINONE OXIDOREDUCTASE SUBUNIT ND4L"/>
    <property type="match status" value="1"/>
</dbReference>
<dbReference type="Pfam" id="PF00420">
    <property type="entry name" value="Oxidored_q2"/>
    <property type="match status" value="1"/>
</dbReference>